<dbReference type="EC" id="3.4.21.72"/>
<dbReference type="EMBL" id="X04835">
    <property type="protein sequence ID" value="CAA28538.1"/>
    <property type="molecule type" value="Genomic_DNA"/>
</dbReference>
<dbReference type="PIR" id="A26039">
    <property type="entry name" value="A26039"/>
</dbReference>
<dbReference type="SMR" id="P09790"/>
<dbReference type="BindingDB" id="P09790"/>
<dbReference type="ChEMBL" id="CHEMBL3970"/>
<dbReference type="MEROPS" id="S06.001"/>
<dbReference type="TCDB" id="1.B.12.3.1">
    <property type="family name" value="the autotransporter-1 (at-1) family"/>
</dbReference>
<dbReference type="KEGG" id="ag:CAA28538"/>
<dbReference type="GO" id="GO:0009279">
    <property type="term" value="C:cell outer membrane"/>
    <property type="evidence" value="ECO:0007669"/>
    <property type="project" value="UniProtKB-SubCell"/>
</dbReference>
<dbReference type="GO" id="GO:0009986">
    <property type="term" value="C:cell surface"/>
    <property type="evidence" value="ECO:0007669"/>
    <property type="project" value="UniProtKB-SubCell"/>
</dbReference>
<dbReference type="GO" id="GO:0005576">
    <property type="term" value="C:extracellular region"/>
    <property type="evidence" value="ECO:0007669"/>
    <property type="project" value="UniProtKB-SubCell"/>
</dbReference>
<dbReference type="GO" id="GO:0042597">
    <property type="term" value="C:periplasmic space"/>
    <property type="evidence" value="ECO:0007669"/>
    <property type="project" value="UniProtKB-SubCell"/>
</dbReference>
<dbReference type="GO" id="GO:0004252">
    <property type="term" value="F:serine-type endopeptidase activity"/>
    <property type="evidence" value="ECO:0007669"/>
    <property type="project" value="InterPro"/>
</dbReference>
<dbReference type="GO" id="GO:0006508">
    <property type="term" value="P:proteolysis"/>
    <property type="evidence" value="ECO:0007669"/>
    <property type="project" value="UniProtKB-KW"/>
</dbReference>
<dbReference type="CDD" id="cd06503">
    <property type="entry name" value="ATP-synt_Fo_b"/>
    <property type="match status" value="1"/>
</dbReference>
<dbReference type="CDD" id="cd01343">
    <property type="entry name" value="PL1_Passenger_AT"/>
    <property type="match status" value="1"/>
</dbReference>
<dbReference type="Gene3D" id="2.160.20.20">
    <property type="match status" value="1"/>
</dbReference>
<dbReference type="Gene3D" id="2.40.10.120">
    <property type="match status" value="1"/>
</dbReference>
<dbReference type="Gene3D" id="3.30.160.280">
    <property type="match status" value="1"/>
</dbReference>
<dbReference type="Gene3D" id="2.40.128.130">
    <property type="entry name" value="Autotransporter beta-domain"/>
    <property type="match status" value="1"/>
</dbReference>
<dbReference type="InterPro" id="IPR005546">
    <property type="entry name" value="Autotransporte_beta"/>
</dbReference>
<dbReference type="InterPro" id="IPR036709">
    <property type="entry name" value="Autotransporte_beta_dom_sf"/>
</dbReference>
<dbReference type="InterPro" id="IPR012332">
    <property type="entry name" value="Autotransporter_pectin_lyase_C"/>
</dbReference>
<dbReference type="InterPro" id="IPR050909">
    <property type="entry name" value="Bact_Autotransporter_VF"/>
</dbReference>
<dbReference type="InterPro" id="IPR011050">
    <property type="entry name" value="Pectin_lyase_fold/virulence"/>
</dbReference>
<dbReference type="InterPro" id="IPR000710">
    <property type="entry name" value="Peptidase_S6"/>
</dbReference>
<dbReference type="InterPro" id="IPR030396">
    <property type="entry name" value="Peptidase_S6_dom"/>
</dbReference>
<dbReference type="InterPro" id="IPR004899">
    <property type="entry name" value="Pertactin_central"/>
</dbReference>
<dbReference type="PANTHER" id="PTHR12338">
    <property type="entry name" value="AUTOTRANSPORTER"/>
    <property type="match status" value="1"/>
</dbReference>
<dbReference type="PANTHER" id="PTHR12338:SF9">
    <property type="entry name" value="IMMUNOGLOBULIN A1 PROTEASE AUTOTRANSPORTER"/>
    <property type="match status" value="1"/>
</dbReference>
<dbReference type="Pfam" id="PF03797">
    <property type="entry name" value="Autotransporter"/>
    <property type="match status" value="1"/>
</dbReference>
<dbReference type="Pfam" id="PF24078">
    <property type="entry name" value="Beta-sol_PIC_HAP1_IgA0_2nd"/>
    <property type="match status" value="1"/>
</dbReference>
<dbReference type="Pfam" id="PF24077">
    <property type="entry name" value="IgA0_D2"/>
    <property type="match status" value="1"/>
</dbReference>
<dbReference type="Pfam" id="PF02395">
    <property type="entry name" value="Peptidase_S6"/>
    <property type="match status" value="1"/>
</dbReference>
<dbReference type="Pfam" id="PF03212">
    <property type="entry name" value="Pertactin"/>
    <property type="match status" value="1"/>
</dbReference>
<dbReference type="PRINTS" id="PR00921">
    <property type="entry name" value="IGASERPTASE"/>
</dbReference>
<dbReference type="SMART" id="SM00869">
    <property type="entry name" value="Autotransporter"/>
    <property type="match status" value="1"/>
</dbReference>
<dbReference type="SUPFAM" id="SSF103515">
    <property type="entry name" value="Autotransporter"/>
    <property type="match status" value="1"/>
</dbReference>
<dbReference type="SUPFAM" id="SSF51126">
    <property type="entry name" value="Pectin lyase-like"/>
    <property type="match status" value="1"/>
</dbReference>
<dbReference type="PROSITE" id="PS51208">
    <property type="entry name" value="AUTOTRANSPORTER"/>
    <property type="match status" value="1"/>
</dbReference>
<dbReference type="PROSITE" id="PS51691">
    <property type="entry name" value="PEPTIDASE_S6"/>
    <property type="match status" value="1"/>
</dbReference>
<evidence type="ECO:0000250" key="1"/>
<evidence type="ECO:0000255" key="2"/>
<evidence type="ECO:0000255" key="3">
    <source>
        <dbReference type="PROSITE-ProRule" id="PRU00556"/>
    </source>
</evidence>
<evidence type="ECO:0000255" key="4">
    <source>
        <dbReference type="PROSITE-ProRule" id="PRU01028"/>
    </source>
</evidence>
<evidence type="ECO:0000256" key="5">
    <source>
        <dbReference type="SAM" id="MobiDB-lite"/>
    </source>
</evidence>
<evidence type="ECO:0000305" key="6"/>
<name>IGA_NEIGO</name>
<proteinExistence type="evidence at protein level"/>
<keyword id="KW-0068">Autocatalytic cleavage</keyword>
<keyword id="KW-0998">Cell outer membrane</keyword>
<keyword id="KW-0903">Direct protein sequencing</keyword>
<keyword id="KW-0378">Hydrolase</keyword>
<keyword id="KW-0472">Membrane</keyword>
<keyword id="KW-0574">Periplasm</keyword>
<keyword id="KW-0645">Protease</keyword>
<keyword id="KW-0964">Secreted</keyword>
<keyword id="KW-0720">Serine protease</keyword>
<keyword id="KW-0732">Signal</keyword>
<keyword id="KW-0812">Transmembrane</keyword>
<keyword id="KW-1134">Transmembrane beta strand</keyword>
<keyword id="KW-0865">Zymogen</keyword>
<accession>P09790</accession>
<protein>
    <recommendedName>
        <fullName>IgA-specific serine endopeptidase autotransporter</fullName>
        <ecNumber>3.4.21.72</ecNumber>
    </recommendedName>
    <component>
        <recommendedName>
            <fullName>IgA-specific serine endopeptidase</fullName>
        </recommendedName>
        <alternativeName>
            <fullName>IgA protease</fullName>
        </alternativeName>
    </component>
    <component>
        <recommendedName>
            <fullName>IgA-specific serine endopeptidase translocator</fullName>
        </recommendedName>
        <alternativeName>
            <fullName>Helper peptide</fullName>
        </alternativeName>
    </component>
</protein>
<comment type="function">
    <text>This protease is specific for immunoglobulin A.</text>
</comment>
<comment type="catalytic activity">
    <reaction>
        <text>Cleavage of immunoglobulin A molecules at certain Pro-|-Xaa bonds in the hinge region. No small molecule substrates are known.</text>
        <dbReference type="EC" id="3.4.21.72"/>
    </reaction>
</comment>
<comment type="subcellular location">
    <molecule>IgA-specific serine endopeptidase autotransporter</molecule>
    <subcellularLocation>
        <location evidence="1">Periplasm</location>
    </subcellularLocation>
</comment>
<comment type="subcellular location">
    <molecule>IgA-specific serine endopeptidase</molecule>
    <subcellularLocation>
        <location>Secreted</location>
    </subcellularLocation>
    <subcellularLocation>
        <location>Cell surface</location>
    </subcellularLocation>
</comment>
<comment type="subcellular location">
    <molecule>IgA-specific serine endopeptidase translocator</molecule>
    <subcellularLocation>
        <location evidence="1">Cell outer membrane</location>
        <topology evidence="1">Multi-pass membrane protein</topology>
    </subcellularLocation>
    <text evidence="1">The cleaved C-terminal fragment (autotransporter domain) is localized in the outer membrane.</text>
</comment>
<comment type="domain">
    <text>The signal peptide, cleaved at the inner membrane, guides the autotransporter protein to the periplasmic space. Then, insertion of the C-terminal translocator domain in the outer membrane forms a hydrophilic pore for the translocation of the passenger domain to the bacterial cell surface, with subsequent cleavage.</text>
</comment>
<sequence length="1532" mass="168976">MKAKRFKINAISLSIFLAYALTPYSEAALVRDDVDYQIFRDFAENKGKFFVGATDLSVKNKRGQNIGNALSNVPMIDFSVADVNKRIATVVDPQYAVSVKHAKAEVHTFYYGQYNGHNDVADKENEYRVVEQNNYEPHKAWGASNLGRLEDYNMARFNKFVTEVAPIAPTDAGGGLDTYKDKNRFSSFVRIGAGRQLVYEKGVYHQEGNEKGYDLRDLSQAYRYAIAGTPYKDINIDQTMNTEGLIGFGNHNKQYSAEELKQALSQDALTNYGVLGDSGSPLFAFDKQKNQWVFLGTYDYWAGYGKKSWQEWNIYKKEFADKIKQHDNAGTVKGNGEHHWKTTGTNSHIGSTAVRLANNEGDANNGQNVTFEDNGTLVLNQNINQGAGGLFFKGDYTVKGANNDITWLGAGIDVADGKKVVWQVKNPNGDRLAKIGKGTLEINGTGVNQGQLKVGDGTVILNQKADADKKVQAFSQVGIVSGRGTLVLNSSNQINPDNLYFGFRGGRLDANGNDLTFEHIRNVDEGARIVNHNTDHASTITLTGKSLITNPNSLSVHSIQNDYDEDDYSYYYRPRRPIPQGKDLYYKNYRYYALKSGGRLNAPMPENGVAENNDWIFMGYTQEEARKNAMNHKNNRRIGDFGGFFDEENGKGHNGALNLNFNGKSAQKRFLLTGGANLNGKISVTQGNVLLSGRPTPHARDFVNKSSARKDAHFSKNNEVVFEDDWINRTFKAAEIAVNQSASFSSGRNVSDITANITATDNAKVNLGYKNGDEVCVRSDYTGYVTCNTGNLSDKALNSFDATRINGNVNLNQNAALVLGKAALWGKIQGQGNSRVSLNQHSKWHLTGDSQVHNLSLADSHIHLNNASDAQSANKYHTIKINHLSGNGHFHYLTDLAKNLGDKVLVKESASGHYQLHVQNKTGEPNQEGLDLFDASSVQDRSRLFVSLANHYVDLGALRYTIKTENGITRLYNPYAGNGRPVKPAPSPAANTASQAQKATQTDGAQIAKPQNIVVAPPSPQANQAEEALRQQAKAEQVKRQQAAEAEKVARQKDEEAKRKAAEIARQQEEARKAAELAAKQKAEAERKARELARQKAEEASHQANAKPKRRRRRAILPRPPAPVFSLDDYDAKDNSESSIGNLARVIPRMGRELINDYEEIPLEELEDEAEEERRQATQFHSKSRNRRAISSEPSSDEDASESVSTSDKHPQDNTELHEKVETAGLQPRAAQPRTQAAAQADAVSTNTNSALSDAMASTQSILLDTGAYLTRHIAQKSRADAEKNSVWMSNTGYGRDYASAQYRRFSSKRTQTQIGIDRSLSENMQIGGVLTYSDSQHTFDQAGGKNTFVQANLYGKYYLNDAWYVAGDIGAGSLRSRLQTQQKANFNRTSIQTGLTLGNTLKINQFEIVPSAGIRYSRLSSADYKLGDDSVKVSSMAVKTLTAGLDFAYRFKVGNLTVKPLLSAAYFANYGKGGVNVGGKSFAYKADNQQQYSAGVALLYRNVTLNVNGSITKGKQLEKQKSGQIKIQIRF</sequence>
<reference key="1">
    <citation type="journal article" date="1987" name="Nature">
        <title>Gene structure and extracellular secretion of Neisseria gonorrhoeae IgA protease.</title>
        <authorList>
            <person name="Pohlner J."/>
            <person name="Halter R."/>
            <person name="Beyreuther K."/>
            <person name="Meyer T.F."/>
        </authorList>
    </citation>
    <scope>NUCLEOTIDE SEQUENCE [GENOMIC DNA]</scope>
    <scope>PARTIAL PROTEIN SEQUENCE</scope>
    <source>
        <strain>MS11</strain>
    </source>
</reference>
<reference key="2">
    <citation type="journal article" date="1989" name="EMBO J.">
        <title>Mosaic-like organization of IgA protease genes in Neisseria gonorrhoeae generated by horizontal genetic exchange in vivo.</title>
        <authorList>
            <person name="Halter R."/>
            <person name="Pohlner J."/>
            <person name="Meyer T.F."/>
        </authorList>
    </citation>
    <scope>NUCLEOTIDE SEQUENCE [GENOMIC DNA] OF 281-680 AND 957-1256</scope>
    <source>
        <strain>MS11</strain>
    </source>
</reference>
<reference key="3">
    <citation type="journal article" date="1990" name="J. Biol. Chem.">
        <title>Inhibition of IgA1 proteinases from Neisseria gonorrhoeae and Hemophilus influenzae by peptide prolyl boronic acids.</title>
        <authorList>
            <person name="Bachovchin W.W."/>
            <person name="Plaut A.G."/>
            <person name="Flentke G.R."/>
            <person name="Lynch M."/>
            <person name="Kettner C.A."/>
        </authorList>
    </citation>
    <scope>ACTIVE SITE</scope>
</reference>
<organism>
    <name type="scientific">Neisseria gonorrhoeae</name>
    <dbReference type="NCBI Taxonomy" id="485"/>
    <lineage>
        <taxon>Bacteria</taxon>
        <taxon>Pseudomonadati</taxon>
        <taxon>Pseudomonadota</taxon>
        <taxon>Betaproteobacteria</taxon>
        <taxon>Neisseriales</taxon>
        <taxon>Neisseriaceae</taxon>
        <taxon>Neisseria</taxon>
    </lineage>
</organism>
<gene>
    <name type="primary">iga</name>
</gene>
<feature type="signal peptide">
    <location>
        <begin position="1"/>
        <end position="27"/>
    </location>
</feature>
<feature type="chain" id="PRO_0000387603" description="IgA-specific serine endopeptidase autotransporter">
    <location>
        <begin position="28"/>
        <end position="1532"/>
    </location>
</feature>
<feature type="chain" id="PRO_0000026968" description="IgA-specific serine endopeptidase">
    <location>
        <begin position="28"/>
        <end position="986"/>
    </location>
</feature>
<feature type="chain" id="PRO_0000026969" description="IgA-specific serine endopeptidase translocator">
    <location>
        <begin position="987"/>
        <end position="1532"/>
    </location>
</feature>
<feature type="domain" description="Peptidase S6" evidence="4">
    <location>
        <begin position="28"/>
        <end position="322"/>
    </location>
</feature>
<feature type="domain" description="Autotransporter" evidence="3">
    <location>
        <begin position="1280"/>
        <end position="1532"/>
    </location>
</feature>
<feature type="region of interest" description="Disordered" evidence="5">
    <location>
        <begin position="979"/>
        <end position="1136"/>
    </location>
</feature>
<feature type="region of interest" description="Disordered" evidence="5">
    <location>
        <begin position="1166"/>
        <end position="1217"/>
    </location>
</feature>
<feature type="compositionally biased region" description="Polar residues" evidence="5">
    <location>
        <begin position="989"/>
        <end position="1004"/>
    </location>
</feature>
<feature type="compositionally biased region" description="Basic and acidic residues" evidence="5">
    <location>
        <begin position="1045"/>
        <end position="1101"/>
    </location>
</feature>
<feature type="compositionally biased region" description="Basic residues" evidence="5">
    <location>
        <begin position="1107"/>
        <end position="1116"/>
    </location>
</feature>
<feature type="compositionally biased region" description="Basic and acidic residues" evidence="5">
    <location>
        <begin position="1207"/>
        <end position="1217"/>
    </location>
</feature>
<feature type="active site" evidence="2">
    <location>
        <position position="278"/>
    </location>
</feature>
<feature type="site" description="Cleavage; by autolysis">
    <location>
        <begin position="986"/>
        <end position="987"/>
    </location>
</feature>
<feature type="site" description="Cleavage; by autolysis">
    <location>
        <begin position="1018"/>
        <end position="1019"/>
    </location>
</feature>
<feature type="site" description="Cleavage; by autolysis">
    <location>
        <begin position="1121"/>
        <end position="1122"/>
    </location>
</feature>
<feature type="sequence conflict" description="In Ref. 2." evidence="6" ref="2">
    <original>H</original>
    <variation>N</variation>
    <location>
        <position position="326"/>
    </location>
</feature>
<feature type="sequence conflict" description="In Ref. 2." evidence="6" ref="2">
    <original>H</original>
    <variation>N</variation>
    <location>
        <position position="338"/>
    </location>
</feature>
<feature type="sequence conflict" description="In Ref. 2." evidence="6" ref="2">
    <original>N</original>
    <variation>M</variation>
    <location>
        <position position="428"/>
    </location>
</feature>
<feature type="sequence conflict" description="In Ref. 2." evidence="6" ref="2">
    <original>H</original>
    <variation>N</variation>
    <location>
        <position position="532"/>
    </location>
</feature>
<feature type="sequence conflict" description="In Ref. 2." evidence="6" ref="2">
    <original>I</original>
    <variation>V</variation>
    <location>
        <position position="616"/>
    </location>
</feature>
<feature type="sequence conflict" description="In Ref. 2." evidence="6" ref="2">
    <original>H</original>
    <variation>N</variation>
    <location>
        <position position="632"/>
    </location>
</feature>
<feature type="sequence conflict" description="In Ref. 2." evidence="6" ref="2">
    <original>K</original>
    <variation>N</variation>
    <location>
        <position position="668"/>
    </location>
</feature>